<sequence>MEEGCSTLVRSLEQKYLDDDEDIVQDIIFTGFTGCSPCKMASQRALELLVLNNMNIDTIGDSEKLATLASHVSEADLGWNQISKWSDIACILKNLPHLRVLNIGHNPLNPVIDHELPVSTLHTIILNGTHLPFKTLQSFLSVLPKVTELHMSDNQFNDDDDCDEPISTTVRTVHLNRCGFLKWSSVMNVVKRFPNVCSVFVCENPLKDVTHCKHFEQLPFWNFLNLAKTSIDSWDSLDQLNRMTSISDLRVPNIPLLDALTNEERLHLIIGRLHHLRVLNGSKISSEQREQSERFFIRYYQEQKEKPLQYKTLIDKHGNLEKLVTIDLTPKKEAVVKILCEEKEVNQEITISLEPTVLDFMKILDPKVGVKFTRMKLFLLREDGRTDDFSSSDYNMPLHYFKIEDGDSFLVQEKIIVTRRRRPPSSTSSSSS</sequence>
<protein>
    <recommendedName>
        <fullName evidence="6">Tubulin-specific chaperone cofactor E-like protein</fullName>
    </recommendedName>
</protein>
<feature type="chain" id="PRO_0000460617" description="Tubulin-specific chaperone cofactor E-like protein">
    <location>
        <begin position="1"/>
        <end position="432"/>
    </location>
</feature>
<feature type="repeat" description="LRR 1" evidence="4">
    <location>
        <begin position="69"/>
        <end position="94"/>
    </location>
</feature>
<feature type="repeat" description="LRR 2" evidence="4">
    <location>
        <begin position="95"/>
        <end position="117"/>
    </location>
</feature>
<feature type="repeat" description="LRR 3" evidence="4">
    <location>
        <begin position="118"/>
        <end position="140"/>
    </location>
</feature>
<feature type="repeat" description="LRR 4" evidence="4">
    <location>
        <begin position="143"/>
        <end position="167"/>
    </location>
</feature>
<feature type="repeat" description="LRR 5" evidence="4">
    <location>
        <begin position="168"/>
        <end position="191"/>
    </location>
</feature>
<feature type="repeat" description="LRR 6" evidence="4">
    <location>
        <begin position="193"/>
        <end position="217"/>
    </location>
</feature>
<feature type="repeat" description="LRR 7" evidence="4">
    <location>
        <begin position="218"/>
        <end position="242"/>
    </location>
</feature>
<feature type="region of interest" description="LRRCT" evidence="4">
    <location>
        <begin position="254"/>
        <end position="295"/>
    </location>
</feature>
<feature type="region of interest" description="Ubiquitin-like (UBL)" evidence="4">
    <location>
        <begin position="324"/>
        <end position="415"/>
    </location>
</feature>
<feature type="splice variant" id="VSP_062364" description="In isoform b." evidence="5">
    <location>
        <begin position="128"/>
        <end position="141"/>
    </location>
</feature>
<dbReference type="EMBL" id="BX284606">
    <property type="protein sequence ID" value="CCD65411.1"/>
    <property type="molecule type" value="Genomic_DNA"/>
</dbReference>
<dbReference type="EMBL" id="BX284606">
    <property type="protein sequence ID" value="CCD65412.1"/>
    <property type="molecule type" value="Genomic_DNA"/>
</dbReference>
<dbReference type="RefSeq" id="NP_741764.1">
    <molecule id="H2KYZ5-1"/>
    <property type="nucleotide sequence ID" value="NM_171665.6"/>
</dbReference>
<dbReference type="RefSeq" id="NP_741765.1">
    <molecule id="H2KYZ5-2"/>
    <property type="nucleotide sequence ID" value="NM_171947.7"/>
</dbReference>
<dbReference type="SMR" id="H2KYZ5"/>
<dbReference type="FunCoup" id="H2KYZ5">
    <property type="interactions" value="2483"/>
</dbReference>
<dbReference type="STRING" id="6239.C52B9.3a.1"/>
<dbReference type="PaxDb" id="6239-C52B9.3a"/>
<dbReference type="PeptideAtlas" id="H2KYZ5"/>
<dbReference type="EnsemblMetazoa" id="C52B9.3a.1">
    <molecule id="H2KYZ5-1"/>
    <property type="protein sequence ID" value="C52B9.3a.1"/>
    <property type="gene ID" value="WBGene00016866"/>
</dbReference>
<dbReference type="EnsemblMetazoa" id="C52B9.3b.1">
    <molecule id="H2KYZ5-2"/>
    <property type="protein sequence ID" value="C52B9.3b.1"/>
    <property type="gene ID" value="WBGene00016866"/>
</dbReference>
<dbReference type="GeneID" id="180700"/>
<dbReference type="KEGG" id="cel:CELE_C52B9.3"/>
<dbReference type="AGR" id="WB:WBGene00016866"/>
<dbReference type="CTD" id="180700"/>
<dbReference type="WormBase" id="C52B9.3a">
    <molecule id="H2KYZ5-1"/>
    <property type="protein sequence ID" value="CE04255"/>
    <property type="gene ID" value="WBGene00016866"/>
    <property type="gene designation" value="coel-1"/>
</dbReference>
<dbReference type="WormBase" id="C52B9.3b">
    <property type="protein sequence ID" value="CE30912"/>
    <property type="gene ID" value="WBGene00016866"/>
    <property type="gene designation" value="coel-1"/>
</dbReference>
<dbReference type="eggNOG" id="KOG2982">
    <property type="taxonomic scope" value="Eukaryota"/>
</dbReference>
<dbReference type="GeneTree" id="ENSGT00530000063405"/>
<dbReference type="HOGENOM" id="CLU_017716_1_1_1"/>
<dbReference type="InParanoid" id="H2KYZ5"/>
<dbReference type="OMA" id="MRFPNKQ"/>
<dbReference type="OrthoDB" id="5855206at2759"/>
<dbReference type="PhylomeDB" id="H2KYZ5"/>
<dbReference type="Proteomes" id="UP000001940">
    <property type="component" value="Chromosome X"/>
</dbReference>
<dbReference type="Bgee" id="WBGene00016866">
    <property type="expression patterns" value="Expressed in pharyngeal muscle cell (C elegans) and 3 other cell types or tissues"/>
</dbReference>
<dbReference type="ExpressionAtlas" id="H2KYZ5">
    <property type="expression patterns" value="baseline and differential"/>
</dbReference>
<dbReference type="GO" id="GO:0005737">
    <property type="term" value="C:cytoplasm"/>
    <property type="evidence" value="ECO:0000318"/>
    <property type="project" value="GO_Central"/>
</dbReference>
<dbReference type="GO" id="GO:0005856">
    <property type="term" value="C:cytoskeleton"/>
    <property type="evidence" value="ECO:0007669"/>
    <property type="project" value="UniProtKB-SubCell"/>
</dbReference>
<dbReference type="GO" id="GO:0043014">
    <property type="term" value="F:alpha-tubulin binding"/>
    <property type="evidence" value="ECO:0000318"/>
    <property type="project" value="GO_Central"/>
</dbReference>
<dbReference type="GO" id="GO:0000226">
    <property type="term" value="P:microtubule cytoskeleton organization"/>
    <property type="evidence" value="ECO:0000318"/>
    <property type="project" value="GO_Central"/>
</dbReference>
<dbReference type="GO" id="GO:0007023">
    <property type="term" value="P:post-chaperonin tubulin folding pathway"/>
    <property type="evidence" value="ECO:0000318"/>
    <property type="project" value="GO_Central"/>
</dbReference>
<dbReference type="GO" id="GO:0007021">
    <property type="term" value="P:tubulin complex assembly"/>
    <property type="evidence" value="ECO:0000318"/>
    <property type="project" value="GO_Central"/>
</dbReference>
<dbReference type="FunFam" id="3.80.10.10:FF:001355">
    <property type="entry name" value="Tubulin folding COfactor E-Like protein"/>
    <property type="match status" value="1"/>
</dbReference>
<dbReference type="Gene3D" id="3.80.10.10">
    <property type="entry name" value="Ribonuclease Inhibitor"/>
    <property type="match status" value="2"/>
</dbReference>
<dbReference type="InterPro" id="IPR032675">
    <property type="entry name" value="LRR_dom_sf"/>
</dbReference>
<dbReference type="InterPro" id="IPR029071">
    <property type="entry name" value="Ubiquitin-like_domsf"/>
</dbReference>
<dbReference type="PANTHER" id="PTHR18849:SF0">
    <property type="entry name" value="CILIA- AND FLAGELLA-ASSOCIATED PROTEIN 410-RELATED"/>
    <property type="match status" value="1"/>
</dbReference>
<dbReference type="PANTHER" id="PTHR18849">
    <property type="entry name" value="LEUCINE RICH REPEAT PROTEIN"/>
    <property type="match status" value="1"/>
</dbReference>
<dbReference type="SUPFAM" id="SSF52058">
    <property type="entry name" value="L domain-like"/>
    <property type="match status" value="1"/>
</dbReference>
<dbReference type="SUPFAM" id="SSF54236">
    <property type="entry name" value="Ubiquitin-like"/>
    <property type="match status" value="1"/>
</dbReference>
<evidence type="ECO:0000250" key="1">
    <source>
        <dbReference type="UniProtKB" id="Q5QJ74"/>
    </source>
</evidence>
<evidence type="ECO:0000269" key="2">
    <source>
    </source>
</evidence>
<evidence type="ECO:0000269" key="3">
    <source>
    </source>
</evidence>
<evidence type="ECO:0000303" key="4">
    <source>
    </source>
</evidence>
<evidence type="ECO:0000305" key="5"/>
<evidence type="ECO:0000305" key="6">
    <source>
    </source>
</evidence>
<evidence type="ECO:0000312" key="7">
    <source>
        <dbReference type="Proteomes" id="UP000001940"/>
    </source>
</evidence>
<evidence type="ECO:0000312" key="8">
    <source>
        <dbReference type="WormBase" id="C52B9.3a"/>
    </source>
</evidence>
<evidence type="ECO:0000312" key="9">
    <source>
        <dbReference type="WormBase" id="C52B9.3b"/>
    </source>
</evidence>
<gene>
    <name evidence="8" type="primary">coel-1</name>
    <name evidence="8" type="ORF">C52B9.3</name>
</gene>
<proteinExistence type="evidence at transcript level"/>
<name>TBCEL_CAEEL</name>
<accession>H2KYZ5</accession>
<accession>Q8IFX8</accession>
<reference evidence="7" key="1">
    <citation type="journal article" date="1998" name="Science">
        <title>Genome sequence of the nematode C. elegans: a platform for investigating biology.</title>
        <authorList>
            <consortium name="The C. elegans sequencing consortium"/>
        </authorList>
    </citation>
    <scope>NUCLEOTIDE SEQUENCE [LARGE SCALE GENOMIC DNA] (ISOFORMS A AND B)</scope>
    <source>
        <strain evidence="7">Bristol N2</strain>
    </source>
</reference>
<reference evidence="5" key="2">
    <citation type="journal article" date="2013" name="PLoS Genet.">
        <title>Identification of 526 conserved metazoan genetic innovations exposes a new role for cofactor E-like in neuronal microtubule homeostasis.</title>
        <authorList>
            <person name="Frederic M.Y."/>
            <person name="Lundin V.F."/>
            <person name="Whiteside M.D."/>
            <person name="Cueva J.G."/>
            <person name="Tu D.K."/>
            <person name="Kang S.Y."/>
            <person name="Singh H."/>
            <person name="Baillie D.L."/>
            <person name="Hutter H."/>
            <person name="Goodman M.B."/>
            <person name="Brinkman F.S."/>
            <person name="Leroux M.R."/>
        </authorList>
    </citation>
    <scope>FUNCTION</scope>
    <scope>DEVELOPMENTAL STAGE</scope>
</reference>
<reference evidence="5" key="3">
    <citation type="journal article" date="2014" name="Cell Rep.">
        <title>Loss of MEC-17 leads to microtubule instability and axonal degeneration.</title>
        <authorList>
            <person name="Neumann B."/>
            <person name="Hilliard M.A."/>
        </authorList>
    </citation>
    <scope>FUNCTION</scope>
</reference>
<comment type="function">
    <text evidence="2 3">Acts as a regulator of tubulin stability (PubMed:24098140). Involved in microtubule-dependent neuronal function (PubMed:24098140). May be involved in tubulin acetylation/deacetylation pathway (PubMed:24098140, PubMed:24373971).</text>
</comment>
<comment type="subcellular location">
    <subcellularLocation>
        <location evidence="1">Cytoplasm</location>
        <location evidence="1">Cytoskeleton</location>
    </subcellularLocation>
</comment>
<comment type="alternative products">
    <event type="alternative splicing"/>
    <isoform>
        <id>H2KYZ5-1</id>
        <name evidence="8">a</name>
        <sequence type="displayed"/>
    </isoform>
    <isoform>
        <id>H2KYZ5-2</id>
        <name evidence="9">b</name>
        <sequence type="described" ref="VSP_062364"/>
    </isoform>
</comment>
<comment type="developmental stage">
    <text evidence="2">Expressed broadly during embryogenesis; becomes restricted mainly to a subset of neurons during larval development and in adulthood, especially in the anterior lateral ALM touch receptor neurons along the body wall.</text>
</comment>
<organism evidence="7">
    <name type="scientific">Caenorhabditis elegans</name>
    <dbReference type="NCBI Taxonomy" id="6239"/>
    <lineage>
        <taxon>Eukaryota</taxon>
        <taxon>Metazoa</taxon>
        <taxon>Ecdysozoa</taxon>
        <taxon>Nematoda</taxon>
        <taxon>Chromadorea</taxon>
        <taxon>Rhabditida</taxon>
        <taxon>Rhabditina</taxon>
        <taxon>Rhabditomorpha</taxon>
        <taxon>Rhabditoidea</taxon>
        <taxon>Rhabditidae</taxon>
        <taxon>Peloderinae</taxon>
        <taxon>Caenorhabditis</taxon>
    </lineage>
</organism>
<keyword id="KW-0025">Alternative splicing</keyword>
<keyword id="KW-0963">Cytoplasm</keyword>
<keyword id="KW-0206">Cytoskeleton</keyword>
<keyword id="KW-0433">Leucine-rich repeat</keyword>
<keyword id="KW-1185">Reference proteome</keyword>
<keyword id="KW-0677">Repeat</keyword>